<proteinExistence type="inferred from homology"/>
<reference key="1">
    <citation type="journal article" date="2003" name="Science">
        <title>Genome of Geobacter sulfurreducens: metal reduction in subsurface environments.</title>
        <authorList>
            <person name="Methe B.A."/>
            <person name="Nelson K.E."/>
            <person name="Eisen J.A."/>
            <person name="Paulsen I.T."/>
            <person name="Nelson W.C."/>
            <person name="Heidelberg J.F."/>
            <person name="Wu D."/>
            <person name="Wu M."/>
            <person name="Ward N.L."/>
            <person name="Beanan M.J."/>
            <person name="Dodson R.J."/>
            <person name="Madupu R."/>
            <person name="Brinkac L.M."/>
            <person name="Daugherty S.C."/>
            <person name="DeBoy R.T."/>
            <person name="Durkin A.S."/>
            <person name="Gwinn M.L."/>
            <person name="Kolonay J.F."/>
            <person name="Sullivan S.A."/>
            <person name="Haft D.H."/>
            <person name="Selengut J."/>
            <person name="Davidsen T.M."/>
            <person name="Zafar N."/>
            <person name="White O."/>
            <person name="Tran B."/>
            <person name="Romero C."/>
            <person name="Forberger H.A."/>
            <person name="Weidman J.F."/>
            <person name="Khouri H.M."/>
            <person name="Feldblyum T.V."/>
            <person name="Utterback T.R."/>
            <person name="Van Aken S.E."/>
            <person name="Lovley D.R."/>
            <person name="Fraser C.M."/>
        </authorList>
    </citation>
    <scope>NUCLEOTIDE SEQUENCE [LARGE SCALE GENOMIC DNA]</scope>
    <source>
        <strain>ATCC 51573 / DSM 12127 / PCA</strain>
    </source>
</reference>
<keyword id="KW-0028">Amino-acid biosynthesis</keyword>
<keyword id="KW-0368">Histidine biosynthesis</keyword>
<keyword id="KW-0378">Hydrolase</keyword>
<keyword id="KW-0486">Methionine biosynthesis</keyword>
<keyword id="KW-0511">Multifunctional enzyme</keyword>
<keyword id="KW-0521">NADP</keyword>
<keyword id="KW-0554">One-carbon metabolism</keyword>
<keyword id="KW-0560">Oxidoreductase</keyword>
<keyword id="KW-0658">Purine biosynthesis</keyword>
<keyword id="KW-1185">Reference proteome</keyword>
<dbReference type="EC" id="1.5.1.5" evidence="1"/>
<dbReference type="EC" id="3.5.4.9" evidence="1"/>
<dbReference type="EMBL" id="AE017180">
    <property type="protein sequence ID" value="AAR34192.1"/>
    <property type="molecule type" value="Genomic_DNA"/>
</dbReference>
<dbReference type="RefSeq" id="NP_951919.1">
    <property type="nucleotide sequence ID" value="NC_002939.5"/>
</dbReference>
<dbReference type="SMR" id="Q74EU7"/>
<dbReference type="FunCoup" id="Q74EU7">
    <property type="interactions" value="509"/>
</dbReference>
<dbReference type="STRING" id="243231.GSU0862"/>
<dbReference type="EnsemblBacteria" id="AAR34192">
    <property type="protein sequence ID" value="AAR34192"/>
    <property type="gene ID" value="GSU0862"/>
</dbReference>
<dbReference type="KEGG" id="gsu:GSU0862"/>
<dbReference type="PATRIC" id="fig|243231.5.peg.860"/>
<dbReference type="eggNOG" id="COG0190">
    <property type="taxonomic scope" value="Bacteria"/>
</dbReference>
<dbReference type="HOGENOM" id="CLU_034045_2_1_7"/>
<dbReference type="InParanoid" id="Q74EU7"/>
<dbReference type="OrthoDB" id="9803580at2"/>
<dbReference type="UniPathway" id="UPA00193"/>
<dbReference type="Proteomes" id="UP000000577">
    <property type="component" value="Chromosome"/>
</dbReference>
<dbReference type="GO" id="GO:0005829">
    <property type="term" value="C:cytosol"/>
    <property type="evidence" value="ECO:0000318"/>
    <property type="project" value="GO_Central"/>
</dbReference>
<dbReference type="GO" id="GO:0004477">
    <property type="term" value="F:methenyltetrahydrofolate cyclohydrolase activity"/>
    <property type="evidence" value="ECO:0000318"/>
    <property type="project" value="GO_Central"/>
</dbReference>
<dbReference type="GO" id="GO:0004488">
    <property type="term" value="F:methylenetetrahydrofolate dehydrogenase (NADP+) activity"/>
    <property type="evidence" value="ECO:0000318"/>
    <property type="project" value="GO_Central"/>
</dbReference>
<dbReference type="GO" id="GO:0000105">
    <property type="term" value="P:L-histidine biosynthetic process"/>
    <property type="evidence" value="ECO:0007669"/>
    <property type="project" value="UniProtKB-KW"/>
</dbReference>
<dbReference type="GO" id="GO:0009086">
    <property type="term" value="P:methionine biosynthetic process"/>
    <property type="evidence" value="ECO:0007669"/>
    <property type="project" value="UniProtKB-KW"/>
</dbReference>
<dbReference type="GO" id="GO:0006164">
    <property type="term" value="P:purine nucleotide biosynthetic process"/>
    <property type="evidence" value="ECO:0007669"/>
    <property type="project" value="UniProtKB-KW"/>
</dbReference>
<dbReference type="GO" id="GO:0035999">
    <property type="term" value="P:tetrahydrofolate interconversion"/>
    <property type="evidence" value="ECO:0000318"/>
    <property type="project" value="GO_Central"/>
</dbReference>
<dbReference type="CDD" id="cd01080">
    <property type="entry name" value="NAD_bind_m-THF_DH_Cyclohyd"/>
    <property type="match status" value="1"/>
</dbReference>
<dbReference type="FunFam" id="3.40.50.10860:FF:000001">
    <property type="entry name" value="Bifunctional protein FolD"/>
    <property type="match status" value="1"/>
</dbReference>
<dbReference type="FunFam" id="3.40.50.720:FF:000094">
    <property type="entry name" value="Bifunctional protein FolD"/>
    <property type="match status" value="1"/>
</dbReference>
<dbReference type="Gene3D" id="3.40.50.10860">
    <property type="entry name" value="Leucine Dehydrogenase, chain A, domain 1"/>
    <property type="match status" value="1"/>
</dbReference>
<dbReference type="Gene3D" id="3.40.50.720">
    <property type="entry name" value="NAD(P)-binding Rossmann-like Domain"/>
    <property type="match status" value="1"/>
</dbReference>
<dbReference type="HAMAP" id="MF_01576">
    <property type="entry name" value="THF_DHG_CYH"/>
    <property type="match status" value="1"/>
</dbReference>
<dbReference type="InterPro" id="IPR046346">
    <property type="entry name" value="Aminoacid_DH-like_N_sf"/>
</dbReference>
<dbReference type="InterPro" id="IPR036291">
    <property type="entry name" value="NAD(P)-bd_dom_sf"/>
</dbReference>
<dbReference type="InterPro" id="IPR000672">
    <property type="entry name" value="THF_DH/CycHdrlase"/>
</dbReference>
<dbReference type="InterPro" id="IPR020630">
    <property type="entry name" value="THF_DH/CycHdrlase_cat_dom"/>
</dbReference>
<dbReference type="InterPro" id="IPR020867">
    <property type="entry name" value="THF_DH/CycHdrlase_CS"/>
</dbReference>
<dbReference type="InterPro" id="IPR020631">
    <property type="entry name" value="THF_DH/CycHdrlase_NAD-bd_dom"/>
</dbReference>
<dbReference type="NCBIfam" id="NF008058">
    <property type="entry name" value="PRK10792.1"/>
    <property type="match status" value="1"/>
</dbReference>
<dbReference type="NCBIfam" id="NF010783">
    <property type="entry name" value="PRK14186.1"/>
    <property type="match status" value="1"/>
</dbReference>
<dbReference type="NCBIfam" id="NF010785">
    <property type="entry name" value="PRK14188.1"/>
    <property type="match status" value="1"/>
</dbReference>
<dbReference type="PANTHER" id="PTHR48099:SF5">
    <property type="entry name" value="C-1-TETRAHYDROFOLATE SYNTHASE, CYTOPLASMIC"/>
    <property type="match status" value="1"/>
</dbReference>
<dbReference type="PANTHER" id="PTHR48099">
    <property type="entry name" value="C-1-TETRAHYDROFOLATE SYNTHASE, CYTOPLASMIC-RELATED"/>
    <property type="match status" value="1"/>
</dbReference>
<dbReference type="Pfam" id="PF00763">
    <property type="entry name" value="THF_DHG_CYH"/>
    <property type="match status" value="1"/>
</dbReference>
<dbReference type="Pfam" id="PF02882">
    <property type="entry name" value="THF_DHG_CYH_C"/>
    <property type="match status" value="1"/>
</dbReference>
<dbReference type="PRINTS" id="PR00085">
    <property type="entry name" value="THFDHDRGNASE"/>
</dbReference>
<dbReference type="SUPFAM" id="SSF53223">
    <property type="entry name" value="Aminoacid dehydrogenase-like, N-terminal domain"/>
    <property type="match status" value="1"/>
</dbReference>
<dbReference type="SUPFAM" id="SSF51735">
    <property type="entry name" value="NAD(P)-binding Rossmann-fold domains"/>
    <property type="match status" value="1"/>
</dbReference>
<dbReference type="PROSITE" id="PS00766">
    <property type="entry name" value="THF_DHG_CYH_1"/>
    <property type="match status" value="1"/>
</dbReference>
<dbReference type="PROSITE" id="PS00767">
    <property type="entry name" value="THF_DHG_CYH_2"/>
    <property type="match status" value="1"/>
</dbReference>
<sequence length="285" mass="29999">MATIIDGKAIAEKIRADLAAQVKELQSRGITPGLATVLVGSDPASEVYVRMKGDACNKLGMHSVKITRPAETTEEELLALINELNNDPAIHGILVQLPLPPQINADRVLEAISPAKDVDGFHPYNVGRLVTGKPTFQPCTPYGVMVMLQEAGVDLAGKEVVVVGRSNIVGKPVALMCLQRNATVTICHSKTRDLPGRVRAADVVIAAVGVPEMIKGDWIKEGAVVIDVGVNRVGEKKLVGDVEFAAAAERASAITPVPGGVGPMTITMLLHNTLEAAKMAGSGNR</sequence>
<protein>
    <recommendedName>
        <fullName evidence="1">Bifunctional protein FolD 2</fullName>
    </recommendedName>
    <domain>
        <recommendedName>
            <fullName evidence="1">Methylenetetrahydrofolate dehydrogenase</fullName>
            <ecNumber evidence="1">1.5.1.5</ecNumber>
        </recommendedName>
    </domain>
    <domain>
        <recommendedName>
            <fullName evidence="1">Methenyltetrahydrofolate cyclohydrolase</fullName>
            <ecNumber evidence="1">3.5.4.9</ecNumber>
        </recommendedName>
    </domain>
</protein>
<evidence type="ECO:0000255" key="1">
    <source>
        <dbReference type="HAMAP-Rule" id="MF_01576"/>
    </source>
</evidence>
<accession>Q74EU7</accession>
<feature type="chain" id="PRO_0000268361" description="Bifunctional protein FolD 2">
    <location>
        <begin position="1"/>
        <end position="285"/>
    </location>
</feature>
<feature type="binding site" evidence="1">
    <location>
        <begin position="164"/>
        <end position="166"/>
    </location>
    <ligand>
        <name>NADP(+)</name>
        <dbReference type="ChEBI" id="CHEBI:58349"/>
    </ligand>
</feature>
<feature type="binding site" evidence="1">
    <location>
        <position position="189"/>
    </location>
    <ligand>
        <name>NADP(+)</name>
        <dbReference type="ChEBI" id="CHEBI:58349"/>
    </ligand>
</feature>
<feature type="binding site" evidence="1">
    <location>
        <position position="230"/>
    </location>
    <ligand>
        <name>NADP(+)</name>
        <dbReference type="ChEBI" id="CHEBI:58349"/>
    </ligand>
</feature>
<organism>
    <name type="scientific">Geobacter sulfurreducens (strain ATCC 51573 / DSM 12127 / PCA)</name>
    <dbReference type="NCBI Taxonomy" id="243231"/>
    <lineage>
        <taxon>Bacteria</taxon>
        <taxon>Pseudomonadati</taxon>
        <taxon>Thermodesulfobacteriota</taxon>
        <taxon>Desulfuromonadia</taxon>
        <taxon>Geobacterales</taxon>
        <taxon>Geobacteraceae</taxon>
        <taxon>Geobacter</taxon>
    </lineage>
</organism>
<name>FOLD2_GEOSL</name>
<comment type="function">
    <text evidence="1">Catalyzes the oxidation of 5,10-methylenetetrahydrofolate to 5,10-methenyltetrahydrofolate and then the hydrolysis of 5,10-methenyltetrahydrofolate to 10-formyltetrahydrofolate.</text>
</comment>
<comment type="catalytic activity">
    <reaction evidence="1">
        <text>(6R)-5,10-methylene-5,6,7,8-tetrahydrofolate + NADP(+) = (6R)-5,10-methenyltetrahydrofolate + NADPH</text>
        <dbReference type="Rhea" id="RHEA:22812"/>
        <dbReference type="ChEBI" id="CHEBI:15636"/>
        <dbReference type="ChEBI" id="CHEBI:57455"/>
        <dbReference type="ChEBI" id="CHEBI:57783"/>
        <dbReference type="ChEBI" id="CHEBI:58349"/>
        <dbReference type="EC" id="1.5.1.5"/>
    </reaction>
</comment>
<comment type="catalytic activity">
    <reaction evidence="1">
        <text>(6R)-5,10-methenyltetrahydrofolate + H2O = (6R)-10-formyltetrahydrofolate + H(+)</text>
        <dbReference type="Rhea" id="RHEA:23700"/>
        <dbReference type="ChEBI" id="CHEBI:15377"/>
        <dbReference type="ChEBI" id="CHEBI:15378"/>
        <dbReference type="ChEBI" id="CHEBI:57455"/>
        <dbReference type="ChEBI" id="CHEBI:195366"/>
        <dbReference type="EC" id="3.5.4.9"/>
    </reaction>
</comment>
<comment type="pathway">
    <text evidence="1">One-carbon metabolism; tetrahydrofolate interconversion.</text>
</comment>
<comment type="subunit">
    <text evidence="1">Homodimer.</text>
</comment>
<comment type="similarity">
    <text evidence="1">Belongs to the tetrahydrofolate dehydrogenase/cyclohydrolase family.</text>
</comment>
<gene>
    <name evidence="1" type="primary">folD2</name>
    <name type="synonym">folD-2</name>
    <name type="ordered locus">GSU0862</name>
</gene>